<name>SYM2_BACCR</name>
<accession>Q815U6</accession>
<gene>
    <name evidence="1" type="primary">metG2</name>
    <name type="ordered locus">BC_5031</name>
</gene>
<keyword id="KW-0030">Aminoacyl-tRNA synthetase</keyword>
<keyword id="KW-0067">ATP-binding</keyword>
<keyword id="KW-0963">Cytoplasm</keyword>
<keyword id="KW-0436">Ligase</keyword>
<keyword id="KW-0479">Metal-binding</keyword>
<keyword id="KW-0547">Nucleotide-binding</keyword>
<keyword id="KW-0648">Protein biosynthesis</keyword>
<keyword id="KW-1185">Reference proteome</keyword>
<keyword id="KW-0862">Zinc</keyword>
<proteinExistence type="inferred from homology"/>
<protein>
    <recommendedName>
        <fullName evidence="1">Methionine--tRNA ligase 2</fullName>
        <ecNumber evidence="1">6.1.1.10</ecNumber>
    </recommendedName>
    <alternativeName>
        <fullName evidence="1">Methionyl-tRNA synthetase 2</fullName>
        <shortName evidence="1">MetRS 2</shortName>
    </alternativeName>
</protein>
<reference key="1">
    <citation type="journal article" date="2003" name="Nature">
        <title>Genome sequence of Bacillus cereus and comparative analysis with Bacillus anthracis.</title>
        <authorList>
            <person name="Ivanova N."/>
            <person name="Sorokin A."/>
            <person name="Anderson I."/>
            <person name="Galleron N."/>
            <person name="Candelon B."/>
            <person name="Kapatral V."/>
            <person name="Bhattacharyya A."/>
            <person name="Reznik G."/>
            <person name="Mikhailova N."/>
            <person name="Lapidus A."/>
            <person name="Chu L."/>
            <person name="Mazur M."/>
            <person name="Goltsman E."/>
            <person name="Larsen N."/>
            <person name="D'Souza M."/>
            <person name="Walunas T."/>
            <person name="Grechkin Y."/>
            <person name="Pusch G."/>
            <person name="Haselkorn R."/>
            <person name="Fonstein M."/>
            <person name="Ehrlich S.D."/>
            <person name="Overbeek R."/>
            <person name="Kyrpides N.C."/>
        </authorList>
    </citation>
    <scope>NUCLEOTIDE SEQUENCE [LARGE SCALE GENOMIC DNA]</scope>
    <source>
        <strain>ATCC 14579 / DSM 31 / CCUG 7414 / JCM 2152 / NBRC 15305 / NCIMB 9373 / NCTC 2599 / NRRL B-3711</strain>
    </source>
</reference>
<evidence type="ECO:0000255" key="1">
    <source>
        <dbReference type="HAMAP-Rule" id="MF_00098"/>
    </source>
</evidence>
<sequence length="544" mass="62871">MSIFIGGAWPYANGSLHLGHIASLLPGDILARYYRSKGENVLYVSGSDCNGTPIAIRAKQEGVTAKEIADQYHEEFQRCFRSLGFTYDCYTRTDSEHHHETVQNVFLRLLEEGHIYKKIVEQAYCETCTQFLPDRYVEGICPHCHEAARGDQCDACSAILDPLDLLEKKCKLCGSTPSVQETEHFYFALHTFQEQIKRAVEIAKQTGTWRDNAIQLTERYVKEGLLDRAVSRDLPIGVPIPVEGYEDKKIYVWIEAVTGYYSASKHWAEETGKDDQEFWDSEAKTYYVHGKDNIPFHSVIWPAVLLGIGEEAIPRHIVSNEYLTVEKRKLSTSKNWAVWVPDILERYDPDSIRYFLTVNAPENRDTDFSWREFIYSHNSELLGAYGNFVNRTLKFIEKYYGGIVPKRSIEVELKDKVEGLYKHVGEAIEQTKFKVALETIFDAVRFANKYFDEKQPWKQREDDPVSCEETIYNCVYLIANFANLLEPFLPFSSERVRNTLSIVKRNWEPQNTLPSRIDSVQPLFERIDVKQIEHEIEKLYGAVK</sequence>
<comment type="function">
    <text evidence="1">Is required not only for elongation of protein synthesis but also for the initiation of all mRNA translation through initiator tRNA(fMet) aminoacylation.</text>
</comment>
<comment type="catalytic activity">
    <reaction evidence="1">
        <text>tRNA(Met) + L-methionine + ATP = L-methionyl-tRNA(Met) + AMP + diphosphate</text>
        <dbReference type="Rhea" id="RHEA:13481"/>
        <dbReference type="Rhea" id="RHEA-COMP:9667"/>
        <dbReference type="Rhea" id="RHEA-COMP:9698"/>
        <dbReference type="ChEBI" id="CHEBI:30616"/>
        <dbReference type="ChEBI" id="CHEBI:33019"/>
        <dbReference type="ChEBI" id="CHEBI:57844"/>
        <dbReference type="ChEBI" id="CHEBI:78442"/>
        <dbReference type="ChEBI" id="CHEBI:78530"/>
        <dbReference type="ChEBI" id="CHEBI:456215"/>
        <dbReference type="EC" id="6.1.1.10"/>
    </reaction>
</comment>
<comment type="cofactor">
    <cofactor evidence="1">
        <name>Zn(2+)</name>
        <dbReference type="ChEBI" id="CHEBI:29105"/>
    </cofactor>
    <text evidence="1">Binds 1 zinc ion per subunit.</text>
</comment>
<comment type="subunit">
    <text evidence="1">Monomer.</text>
</comment>
<comment type="subcellular location">
    <subcellularLocation>
        <location evidence="1">Cytoplasm</location>
    </subcellularLocation>
</comment>
<comment type="similarity">
    <text evidence="1">Belongs to the class-I aminoacyl-tRNA synthetase family. MetG type 1 subfamily.</text>
</comment>
<dbReference type="EC" id="6.1.1.10" evidence="1"/>
<dbReference type="EMBL" id="AE016877">
    <property type="protein sequence ID" value="AAP11903.1"/>
    <property type="molecule type" value="Genomic_DNA"/>
</dbReference>
<dbReference type="RefSeq" id="NP_834702.1">
    <property type="nucleotide sequence ID" value="NC_004722.1"/>
</dbReference>
<dbReference type="RefSeq" id="WP_000021600.1">
    <property type="nucleotide sequence ID" value="NC_004722.1"/>
</dbReference>
<dbReference type="SMR" id="Q815U6"/>
<dbReference type="STRING" id="226900.BC_5031"/>
<dbReference type="KEGG" id="bce:BC5031"/>
<dbReference type="PATRIC" id="fig|226900.8.peg.5186"/>
<dbReference type="HOGENOM" id="CLU_009710_1_2_9"/>
<dbReference type="OrthoDB" id="9810191at2"/>
<dbReference type="Proteomes" id="UP000001417">
    <property type="component" value="Chromosome"/>
</dbReference>
<dbReference type="GO" id="GO:0005829">
    <property type="term" value="C:cytosol"/>
    <property type="evidence" value="ECO:0000318"/>
    <property type="project" value="GO_Central"/>
</dbReference>
<dbReference type="GO" id="GO:0005524">
    <property type="term" value="F:ATP binding"/>
    <property type="evidence" value="ECO:0007669"/>
    <property type="project" value="UniProtKB-UniRule"/>
</dbReference>
<dbReference type="GO" id="GO:0046872">
    <property type="term" value="F:metal ion binding"/>
    <property type="evidence" value="ECO:0007669"/>
    <property type="project" value="UniProtKB-KW"/>
</dbReference>
<dbReference type="GO" id="GO:0004825">
    <property type="term" value="F:methionine-tRNA ligase activity"/>
    <property type="evidence" value="ECO:0000318"/>
    <property type="project" value="GO_Central"/>
</dbReference>
<dbReference type="GO" id="GO:0006431">
    <property type="term" value="P:methionyl-tRNA aminoacylation"/>
    <property type="evidence" value="ECO:0000318"/>
    <property type="project" value="GO_Central"/>
</dbReference>
<dbReference type="CDD" id="cd07957">
    <property type="entry name" value="Anticodon_Ia_Met"/>
    <property type="match status" value="1"/>
</dbReference>
<dbReference type="CDD" id="cd00814">
    <property type="entry name" value="MetRS_core"/>
    <property type="match status" value="1"/>
</dbReference>
<dbReference type="FunFam" id="1.10.730.10:FF:000041">
    <property type="entry name" value="Methionine--tRNA ligase"/>
    <property type="match status" value="1"/>
</dbReference>
<dbReference type="FunFam" id="2.20.28.20:FF:000001">
    <property type="entry name" value="Methionine--tRNA ligase"/>
    <property type="match status" value="1"/>
</dbReference>
<dbReference type="Gene3D" id="3.40.50.620">
    <property type="entry name" value="HUPs"/>
    <property type="match status" value="1"/>
</dbReference>
<dbReference type="Gene3D" id="1.10.730.10">
    <property type="entry name" value="Isoleucyl-tRNA Synthetase, Domain 1"/>
    <property type="match status" value="1"/>
</dbReference>
<dbReference type="Gene3D" id="2.20.28.20">
    <property type="entry name" value="Methionyl-tRNA synthetase, Zn-domain"/>
    <property type="match status" value="1"/>
</dbReference>
<dbReference type="HAMAP" id="MF_00098">
    <property type="entry name" value="Met_tRNA_synth_type1"/>
    <property type="match status" value="1"/>
</dbReference>
<dbReference type="InterPro" id="IPR001412">
    <property type="entry name" value="aa-tRNA-synth_I_CS"/>
</dbReference>
<dbReference type="InterPro" id="IPR041872">
    <property type="entry name" value="Anticodon_Met"/>
</dbReference>
<dbReference type="InterPro" id="IPR023458">
    <property type="entry name" value="Met-tRNA_ligase_1"/>
</dbReference>
<dbReference type="InterPro" id="IPR014758">
    <property type="entry name" value="Met-tRNA_synth"/>
</dbReference>
<dbReference type="InterPro" id="IPR015413">
    <property type="entry name" value="Methionyl/Leucyl_tRNA_Synth"/>
</dbReference>
<dbReference type="InterPro" id="IPR033911">
    <property type="entry name" value="MetRS_core"/>
</dbReference>
<dbReference type="InterPro" id="IPR029038">
    <property type="entry name" value="MetRS_Zn"/>
</dbReference>
<dbReference type="InterPro" id="IPR014729">
    <property type="entry name" value="Rossmann-like_a/b/a_fold"/>
</dbReference>
<dbReference type="InterPro" id="IPR009080">
    <property type="entry name" value="tRNAsynth_Ia_anticodon-bd"/>
</dbReference>
<dbReference type="NCBIfam" id="TIGR00398">
    <property type="entry name" value="metG"/>
    <property type="match status" value="1"/>
</dbReference>
<dbReference type="PANTHER" id="PTHR45765">
    <property type="entry name" value="METHIONINE--TRNA LIGASE"/>
    <property type="match status" value="1"/>
</dbReference>
<dbReference type="PANTHER" id="PTHR45765:SF1">
    <property type="entry name" value="METHIONINE--TRNA LIGASE, CYTOPLASMIC"/>
    <property type="match status" value="1"/>
</dbReference>
<dbReference type="Pfam" id="PF19303">
    <property type="entry name" value="Anticodon_3"/>
    <property type="match status" value="1"/>
</dbReference>
<dbReference type="Pfam" id="PF09334">
    <property type="entry name" value="tRNA-synt_1g"/>
    <property type="match status" value="1"/>
</dbReference>
<dbReference type="PRINTS" id="PR01041">
    <property type="entry name" value="TRNASYNTHMET"/>
</dbReference>
<dbReference type="SUPFAM" id="SSF47323">
    <property type="entry name" value="Anticodon-binding domain of a subclass of class I aminoacyl-tRNA synthetases"/>
    <property type="match status" value="1"/>
</dbReference>
<dbReference type="SUPFAM" id="SSF57770">
    <property type="entry name" value="Methionyl-tRNA synthetase (MetRS), Zn-domain"/>
    <property type="match status" value="1"/>
</dbReference>
<dbReference type="SUPFAM" id="SSF52374">
    <property type="entry name" value="Nucleotidylyl transferase"/>
    <property type="match status" value="1"/>
</dbReference>
<dbReference type="PROSITE" id="PS00178">
    <property type="entry name" value="AA_TRNA_LIGASE_I"/>
    <property type="match status" value="1"/>
</dbReference>
<organism>
    <name type="scientific">Bacillus cereus (strain ATCC 14579 / DSM 31 / CCUG 7414 / JCM 2152 / NBRC 15305 / NCIMB 9373 / NCTC 2599 / NRRL B-3711)</name>
    <dbReference type="NCBI Taxonomy" id="226900"/>
    <lineage>
        <taxon>Bacteria</taxon>
        <taxon>Bacillati</taxon>
        <taxon>Bacillota</taxon>
        <taxon>Bacilli</taxon>
        <taxon>Bacillales</taxon>
        <taxon>Bacillaceae</taxon>
        <taxon>Bacillus</taxon>
        <taxon>Bacillus cereus group</taxon>
    </lineage>
</organism>
<feature type="chain" id="PRO_0000139100" description="Methionine--tRNA ligase 2">
    <location>
        <begin position="1"/>
        <end position="544"/>
    </location>
</feature>
<feature type="short sequence motif" description="'HIGH' region">
    <location>
        <begin position="10"/>
        <end position="20"/>
    </location>
</feature>
<feature type="short sequence motif" description="'KMSKS' region">
    <location>
        <begin position="329"/>
        <end position="333"/>
    </location>
</feature>
<feature type="binding site" evidence="1">
    <location>
        <position position="141"/>
    </location>
    <ligand>
        <name>Zn(2+)</name>
        <dbReference type="ChEBI" id="CHEBI:29105"/>
    </ligand>
</feature>
<feature type="binding site" evidence="1">
    <location>
        <position position="144"/>
    </location>
    <ligand>
        <name>Zn(2+)</name>
        <dbReference type="ChEBI" id="CHEBI:29105"/>
    </ligand>
</feature>
<feature type="binding site" evidence="1">
    <location>
        <position position="153"/>
    </location>
    <ligand>
        <name>Zn(2+)</name>
        <dbReference type="ChEBI" id="CHEBI:29105"/>
    </ligand>
</feature>
<feature type="binding site" evidence="1">
    <location>
        <position position="156"/>
    </location>
    <ligand>
        <name>Zn(2+)</name>
        <dbReference type="ChEBI" id="CHEBI:29105"/>
    </ligand>
</feature>
<feature type="binding site" evidence="1">
    <location>
        <position position="332"/>
    </location>
    <ligand>
        <name>ATP</name>
        <dbReference type="ChEBI" id="CHEBI:30616"/>
    </ligand>
</feature>